<comment type="function">
    <text evidence="1">Component of the Mediator complex, a coactivator involved in the regulated transcription of nearly all RNA polymerase II-dependent genes. Mediator functions as a bridge to convey information from gene-specific regulatory proteins to the basal RNA polymerase II transcription machinery. Mediator is recruited to promoters by direct interactions with regulatory proteins and serves as a scaffold for the assembly of a functional preinitiation complex with RNA polymerase II and the general transcription factors. May play a role as a target recruitment subunit in E3 ubiquitin-protein ligase complexes and thus in ubiquitination and subsequent proteasomal degradation of target proteins (By similarity).</text>
</comment>
<comment type="pathway">
    <text>Protein modification; protein ubiquitination.</text>
</comment>
<comment type="subunit">
    <text evidence="1">Component of the Mediator complex. May be part of a multisubunit E3 ubiquitin-protein ligase complex (By similarity).</text>
</comment>
<comment type="subcellular location">
    <subcellularLocation>
        <location evidence="4">Nucleus</location>
    </subcellularLocation>
</comment>
<comment type="similarity">
    <text evidence="4">Belongs to the Mediator complex subunit 8 family.</text>
</comment>
<name>MED8_XENTR</name>
<keyword id="KW-0010">Activator</keyword>
<keyword id="KW-0175">Coiled coil</keyword>
<keyword id="KW-0539">Nucleus</keyword>
<keyword id="KW-1185">Reference proteome</keyword>
<keyword id="KW-0804">Transcription</keyword>
<keyword id="KW-0805">Transcription regulation</keyword>
<keyword id="KW-0833">Ubl conjugation pathway</keyword>
<evidence type="ECO:0000250" key="1"/>
<evidence type="ECO:0000255" key="2"/>
<evidence type="ECO:0000256" key="3">
    <source>
        <dbReference type="SAM" id="MobiDB-lite"/>
    </source>
</evidence>
<evidence type="ECO:0000305" key="4"/>
<gene>
    <name type="primary">med8</name>
</gene>
<proteinExistence type="evidence at transcript level"/>
<organism>
    <name type="scientific">Xenopus tropicalis</name>
    <name type="common">Western clawed frog</name>
    <name type="synonym">Silurana tropicalis</name>
    <dbReference type="NCBI Taxonomy" id="8364"/>
    <lineage>
        <taxon>Eukaryota</taxon>
        <taxon>Metazoa</taxon>
        <taxon>Chordata</taxon>
        <taxon>Craniata</taxon>
        <taxon>Vertebrata</taxon>
        <taxon>Euteleostomi</taxon>
        <taxon>Amphibia</taxon>
        <taxon>Batrachia</taxon>
        <taxon>Anura</taxon>
        <taxon>Pipoidea</taxon>
        <taxon>Pipidae</taxon>
        <taxon>Xenopodinae</taxon>
        <taxon>Xenopus</taxon>
        <taxon>Silurana</taxon>
    </lineage>
</organism>
<sequence>MQREEKQLEACLDALISQVSDIKNSLVGFIHKLENEYDRLTWPSVLDSFALLSGQLNTLNKVLKNEKTPLLRNQVIIPLLLSPDRDEEIMRLTEGRVPVFSHEVVPDHLRTKPDPDVEELEKQLSAEAARITSEAAQKQVQSMNKMCSNLLDKISKEERESELGSLRQNKQTFNPTDTNALVAAVAFGKGLSNRRPPGQGGPMAPGQTGASSMLPNATGMQVPMSLPPNQQQQHMAGVSMSQGSQPGKMPSSIKTNIKSASMHPYQR</sequence>
<protein>
    <recommendedName>
        <fullName>Mediator of RNA polymerase II transcription subunit 8</fullName>
    </recommendedName>
    <alternativeName>
        <fullName>Mediator complex subunit 8</fullName>
    </alternativeName>
</protein>
<reference key="1">
    <citation type="submission" date="2006-10" db="EMBL/GenBank/DDBJ databases">
        <authorList>
            <consortium name="NIH - Xenopus Gene Collection (XGC) project"/>
        </authorList>
    </citation>
    <scope>NUCLEOTIDE SEQUENCE [LARGE SCALE MRNA]</scope>
    <source>
        <tissue>Brain</tissue>
    </source>
</reference>
<feature type="chain" id="PRO_0000304528" description="Mediator of RNA polymerase II transcription subunit 8">
    <location>
        <begin position="1"/>
        <end position="267"/>
    </location>
</feature>
<feature type="region of interest" description="Disordered" evidence="3">
    <location>
        <begin position="190"/>
        <end position="267"/>
    </location>
</feature>
<feature type="coiled-coil region" evidence="2">
    <location>
        <begin position="1"/>
        <end position="26"/>
    </location>
</feature>
<feature type="coiled-coil region" evidence="2">
    <location>
        <begin position="116"/>
        <end position="160"/>
    </location>
</feature>
<feature type="compositionally biased region" description="Polar residues" evidence="3">
    <location>
        <begin position="227"/>
        <end position="245"/>
    </location>
</feature>
<accession>Q08BU1</accession>
<dbReference type="EMBL" id="BC124562">
    <property type="protein sequence ID" value="AAI24563.1"/>
    <property type="molecule type" value="mRNA"/>
</dbReference>
<dbReference type="RefSeq" id="NP_001016614.1">
    <property type="nucleotide sequence ID" value="NM_001016614.3"/>
</dbReference>
<dbReference type="SMR" id="Q08BU1"/>
<dbReference type="FunCoup" id="Q08BU1">
    <property type="interactions" value="3611"/>
</dbReference>
<dbReference type="STRING" id="8364.ENSXETP00000047923"/>
<dbReference type="PaxDb" id="8364-ENSXETP00000021128"/>
<dbReference type="DNASU" id="549368"/>
<dbReference type="GeneID" id="549368"/>
<dbReference type="KEGG" id="xtr:549368"/>
<dbReference type="AGR" id="Xenbase:XB-GENE-963498"/>
<dbReference type="CTD" id="112950"/>
<dbReference type="Xenbase" id="XB-GENE-963498">
    <property type="gene designation" value="med8"/>
</dbReference>
<dbReference type="eggNOG" id="KOG3583">
    <property type="taxonomic scope" value="Eukaryota"/>
</dbReference>
<dbReference type="HOGENOM" id="CLU_085476_0_0_1"/>
<dbReference type="InParanoid" id="Q08BU1"/>
<dbReference type="OMA" id="FKLEHEY"/>
<dbReference type="OrthoDB" id="150687at2759"/>
<dbReference type="PhylomeDB" id="Q08BU1"/>
<dbReference type="TreeFam" id="TF316778"/>
<dbReference type="UniPathway" id="UPA00143"/>
<dbReference type="Proteomes" id="UP000008143">
    <property type="component" value="Chromosome 4"/>
</dbReference>
<dbReference type="Bgee" id="ENSXETG00000038548">
    <property type="expression patterns" value="Expressed in egg cell and 12 other cell types or tissues"/>
</dbReference>
<dbReference type="GO" id="GO:0016592">
    <property type="term" value="C:mediator complex"/>
    <property type="evidence" value="ECO:0007669"/>
    <property type="project" value="InterPro"/>
</dbReference>
<dbReference type="GO" id="GO:0003712">
    <property type="term" value="F:transcription coregulator activity"/>
    <property type="evidence" value="ECO:0007669"/>
    <property type="project" value="InterPro"/>
</dbReference>
<dbReference type="GO" id="GO:0016567">
    <property type="term" value="P:protein ubiquitination"/>
    <property type="evidence" value="ECO:0007669"/>
    <property type="project" value="UniProtKB-UniPathway"/>
</dbReference>
<dbReference type="GO" id="GO:0006357">
    <property type="term" value="P:regulation of transcription by RNA polymerase II"/>
    <property type="evidence" value="ECO:0007669"/>
    <property type="project" value="InterPro"/>
</dbReference>
<dbReference type="InterPro" id="IPR019364">
    <property type="entry name" value="Mediatior_Med8_fun/met"/>
</dbReference>
<dbReference type="PANTHER" id="PTHR13074">
    <property type="entry name" value="MEDIATOR OF RNA POLYMERASE II TRANSCRIPTION SUBUNIT 8"/>
    <property type="match status" value="1"/>
</dbReference>
<dbReference type="PANTHER" id="PTHR13074:SF9">
    <property type="entry name" value="MEDIATOR OF RNA POLYMERASE II TRANSCRIPTION SUBUNIT 8"/>
    <property type="match status" value="1"/>
</dbReference>
<dbReference type="Pfam" id="PF10232">
    <property type="entry name" value="Med8"/>
    <property type="match status" value="1"/>
</dbReference>